<organism>
    <name type="scientific">Neisseria meningitidis serogroup B</name>
    <dbReference type="NCBI Taxonomy" id="491"/>
    <lineage>
        <taxon>Bacteria</taxon>
        <taxon>Pseudomonadati</taxon>
        <taxon>Pseudomonadota</taxon>
        <taxon>Betaproteobacteria</taxon>
        <taxon>Neisseriales</taxon>
        <taxon>Neisseriaceae</taxon>
        <taxon>Neisseria</taxon>
    </lineage>
</organism>
<sequence>MKHFPSKVLTTAILATFCSGALAATNDDDVKKAATVAIAAAYNNGQEINGFKAGETIYDIDEDGTITKKDATAADVEADDFKGLGLKKVVTNLTKTVNENKQNVDAKVKAAESEIEKLTTKLADTDAALADTDAALDATTNALNKLGENITTFAEETKTNIVKIDEKLEAVADTVDKHAEAFNDIADSLDETNTKADEAVKTANEAKQTAEETKQNVDAKVKAAETAAGKAEAAAGTANTAADKAEAVAAKVTDIKADIATNKDNIAKKANSADVYTREESDSKFVRIDGLNATTEKLDTRLASAEKSIADHDTRLNGLDKTVSDLRKETRQGLAEQAALSGLFQPYNVGRFNVTAAVGGYKSESAVAIGTGFRFTENFAAKAGVAVGTSSGSSAAYHVGVNYEW</sequence>
<dbReference type="EMBL" id="AF452470">
    <property type="protein sequence ID" value="AAM53086.1"/>
    <property type="molecule type" value="Genomic_DNA"/>
</dbReference>
<dbReference type="PDB" id="6EUN">
    <property type="method" value="X-ray"/>
    <property type="resolution" value="2.45 A"/>
    <property type="chains" value="A/B/C=24-170"/>
</dbReference>
<dbReference type="PDB" id="6EUP">
    <property type="method" value="X-ray"/>
    <property type="resolution" value="2.65 A"/>
    <property type="chains" value="A/B/C=24-170"/>
</dbReference>
<dbReference type="PDBsum" id="6EUN"/>
<dbReference type="PDBsum" id="6EUP"/>
<dbReference type="SMR" id="P0DV44"/>
<dbReference type="GO" id="GO:0009279">
    <property type="term" value="C:cell outer membrane"/>
    <property type="evidence" value="ECO:0007669"/>
    <property type="project" value="UniProtKB-SubCell"/>
</dbReference>
<dbReference type="GO" id="GO:0009986">
    <property type="term" value="C:cell surface"/>
    <property type="evidence" value="ECO:0007669"/>
    <property type="project" value="UniProtKB-SubCell"/>
</dbReference>
<dbReference type="GO" id="GO:0007155">
    <property type="term" value="P:cell adhesion"/>
    <property type="evidence" value="ECO:0007669"/>
    <property type="project" value="UniProtKB-KW"/>
</dbReference>
<dbReference type="Gene3D" id="3.30.1300.30">
    <property type="entry name" value="GSPII I/J protein-like"/>
    <property type="match status" value="1"/>
</dbReference>
<dbReference type="Gene3D" id="1.10.287.950">
    <property type="entry name" value="Methyl-accepting chemotaxis protein"/>
    <property type="match status" value="1"/>
</dbReference>
<dbReference type="InterPro" id="IPR045584">
    <property type="entry name" value="Pilin-like"/>
</dbReference>
<dbReference type="InterPro" id="IPR005594">
    <property type="entry name" value="YadA_C"/>
</dbReference>
<dbReference type="Pfam" id="PF03895">
    <property type="entry name" value="YadA_anchor"/>
    <property type="match status" value="1"/>
</dbReference>
<dbReference type="SUPFAM" id="SSF54523">
    <property type="entry name" value="Pili subunits"/>
    <property type="match status" value="1"/>
</dbReference>
<protein>
    <recommendedName>
        <fullName evidence="14">Neisseria adhesin A</fullName>
        <shortName evidence="15">NadA variant 3</shortName>
    </recommendedName>
</protein>
<name>NADA3_NEIMI</name>
<proteinExistence type="evidence at protein level"/>
<accession>P0DV44</accession>
<feature type="signal peptide" evidence="3">
    <location>
        <begin position="1"/>
        <end position="23"/>
    </location>
</feature>
<feature type="chain" id="PRO_0000455272" description="Neisseria adhesin A" evidence="3">
    <location>
        <begin position="24"/>
        <end position="405"/>
    </location>
</feature>
<feature type="transmembrane region" description="Beta stranded" evidence="1">
    <location>
        <begin position="350"/>
        <end position="360"/>
    </location>
</feature>
<feature type="transmembrane region" description="Beta stranded" evidence="1">
    <location>
        <begin position="364"/>
        <end position="375"/>
    </location>
</feature>
<feature type="transmembrane region" description="Beta stranded" evidence="1">
    <location>
        <begin position="382"/>
        <end position="388"/>
    </location>
</feature>
<feature type="transmembrane region" description="Beta stranded" evidence="1">
    <location>
        <begin position="394"/>
        <end position="405"/>
    </location>
</feature>
<feature type="region of interest" description="Head domain" evidence="18 21">
    <location>
        <begin position="24"/>
        <end position="87"/>
    </location>
</feature>
<feature type="region of interest" description="Coiled stalk domain" evidence="18 21">
    <location>
        <begin position="88"/>
        <end position="350"/>
    </location>
</feature>
<feature type="region of interest" description="Outer membrane translocation of the passenger domain" evidence="2">
    <location>
        <begin position="312"/>
        <end position="350"/>
    </location>
</feature>
<feature type="region of interest" description="Translocator domain" evidence="2 18 21">
    <location>
        <begin position="351"/>
        <end position="405"/>
    </location>
</feature>
<feature type="coiled-coil region" evidence="17 23 24">
    <location>
        <begin position="87"/>
        <end position="170"/>
    </location>
</feature>
<feature type="coiled-coil region" evidence="17">
    <location>
        <begin position="181"/>
        <end position="329"/>
    </location>
</feature>
<feature type="mutagenesis site" description="No longer surface-exposed." evidence="5">
    <location>
        <begin position="1"/>
        <end position="23"/>
    </location>
</feature>
<feature type="mutagenesis site" description="No longer adheres to human epithelial cells, oligomerizes on cell surface." evidence="5">
    <location>
        <begin position="24"/>
        <end position="42"/>
    </location>
</feature>
<feature type="mutagenesis site" description="No longer adheres to human epithelial cells, oligomerizes on cell surface." evidence="7">
    <location>
        <begin position="30"/>
        <end position="87"/>
    </location>
</feature>
<feature type="mutagenesis site" description="Increased thermostability." evidence="13">
    <original>AATVAIA</original>
    <variation>IATVAIV</variation>
    <location>
        <begin position="33"/>
        <end position="39"/>
    </location>
</feature>
<feature type="mutagenesis site" description="Increased thermostability. Loss of binding to human LOX-1." evidence="13">
    <original>AATVAI</original>
    <variation>IATVAL</variation>
    <location>
        <begin position="33"/>
        <end position="38"/>
    </location>
</feature>
<feature type="mutagenesis site" description="Nearly complete loss of binding to human LOX-1." evidence="13">
    <original>A</original>
    <variation>I</variation>
    <location>
        <position position="33"/>
    </location>
</feature>
<feature type="mutagenesis site" description="Nearly complete loss of binding to human LOX-1." evidence="13">
    <original>Y</original>
    <variation>A</variation>
    <location>
        <position position="42"/>
    </location>
</feature>
<feature type="mutagenesis site" description="No longer adheres to human epithelial cells, oligomerizes on cell surface." evidence="5">
    <location>
        <begin position="43"/>
        <end position="70"/>
    </location>
</feature>
<feature type="mutagenesis site" description="No longer adheres to human epithelial cells, oligomerizes on cell surface." evidence="5">
    <location>
        <begin position="71"/>
        <end position="83"/>
    </location>
</feature>
<feature type="mutagenesis site" description="No longer adheres to human epithelial cells, oligomerizes on cell surface." evidence="7">
    <location>
        <begin position="88"/>
        <end position="150"/>
    </location>
</feature>
<feature type="mutagenesis site" description="Adheres to human epithelial cells, oligomerizes on cell surface." evidence="7">
    <location>
        <begin position="180"/>
        <end position="218"/>
    </location>
</feature>
<feature type="mutagenesis site" description="Adheres to human epithelial cells, oligomerizes on cell surface." evidence="7">
    <location>
        <begin position="219"/>
        <end position="288"/>
    </location>
</feature>
<feature type="mutagenesis site" description="Adheres to human epithelial cells, oligomerizes on cell surface." evidence="7">
    <location>
        <begin position="270"/>
        <end position="315"/>
    </location>
</feature>
<feature type="mutagenesis site" description="No longer surface-exposed, protein is in periplasm and supernatant." evidence="5">
    <location>
        <begin position="351"/>
        <end position="405"/>
    </location>
</feature>
<feature type="helix" evidence="25">
    <location>
        <begin position="29"/>
        <end position="49"/>
    </location>
</feature>
<feature type="strand" evidence="25">
    <location>
        <begin position="55"/>
        <end position="60"/>
    </location>
</feature>
<feature type="strand" evidence="25">
    <location>
        <begin position="66"/>
        <end position="70"/>
    </location>
</feature>
<feature type="helix" evidence="25">
    <location>
        <begin position="73"/>
        <end position="77"/>
    </location>
</feature>
<feature type="turn" evidence="25">
    <location>
        <begin position="80"/>
        <end position="83"/>
    </location>
</feature>
<feature type="helix" evidence="25">
    <location>
        <begin position="86"/>
        <end position="170"/>
    </location>
</feature>
<comment type="function">
    <text evidence="4 5 8 10 13 20">Adheres to and induces bacterial uptake by human epithelial cells in a microfilament-dependent process. Binding is reduced by pronase treatment, suggesting there is a protein receptor on the human cells (PubMed:15660996, PubMed:30327444). Possible human protein receptors include integrin beta-1 (ITGB1) and oxidized low-density lipoprotein receptor 1 (OLR1) (Probable). Binds to extracellular human Hsp90 (preferentially the beta isoform, HSP90AB1) on monocytes, binding stimulates monocytes in a TLR4-dependent fashion, polymixin B, which binds NadA, blocks the activation. Hsp90 is probably not the first receptor on human monocytes (PubMed:21949862). Non-membrane anchored protein (residues 24-350) is internalized into human epithelial cells by hijacking the endosome recycling pathway and may be recycled back to the cell surface, which might aid transcellular trafficking of the bacteria (PubMed:25347845). A bacterial cell surface protein; antisera against this protein induce complement-mediated killing of this and other strains (PubMed:12045242).</text>
</comment>
<comment type="subunit">
    <text evidence="4 5 8 9 12 19 20 21">The non-membrane anchored protein (residues 24-350) probably forms a homotrimer; it is assumed the mature protein forms trimers in situ (Probable). The mature protein without the membrane-targeting segment (residues 24-350) binds to human heat shock 90 beta protein (HSP90AB1) both in vitro and when incubated with human monocytes (PubMed:21949862). A subsequent paper showed binding of the same fragment in epithelial cells to both HSP90AA1 and HSP90AB1; in vitro the interaction is stabilized by ADP and the Hsp90 inhibitor 17-AAG (17-N-allylamino-17-demethoxygeldanamycin), in vitro and in vivo both interactions are inhibited by ATP (PubMed:21949862, PubMed:22066472). Binds human oxidized low-density lipoprotein receptor 1 (LOX-1, OLR1) in protein microarrays, in solution and when LOX-1 is expressed on the cell surface. Binds via the head and the beginning of the coiled stalk (residues 24-170); binding can be abrogated by monoclonal antibodies against those specific regions of NadA. Other potential binding partners were identified but not characterized in the same study (PubMed:27302108). Forms high molecular weight oligomers in whole cell extracts that are not disrupted by boiling in SDS buffer (PubMed:12045242, PubMed:15660996).</text>
</comment>
<comment type="subcellular location">
    <subcellularLocation>
        <location evidence="5">Cell outer membrane</location>
    </subcellularLocation>
    <subcellularLocation>
        <location evidence="4 5 7">Cell surface</location>
    </subcellularLocation>
</comment>
<comment type="induction">
    <text evidence="4">Barely visible in early log phase, levels increase to a maximum in stationary phase cells (at protein level).</text>
</comment>
<comment type="domain">
    <text evidence="2 7 11 12 13 18">The signal peptide, cleaved at the inner membrane, guides the autotransporter protein to the periplasmic space. Insertion of the C-terminal translocator domain in the outer membrane forms a hydrophilic pore for the translocation of the passenger domain to the bacterial cell surface (By similarity). The N-terminal head domain (24-87) as well as the dimeric coiled-coil region (88-132) are required for binding to human cells. The C-terminal translocator domain (maximally 54 residues) probably targets the protein to the outer membrane. The middle coiled section is responsible for oligomerization (Probable) (PubMed:20971901). In transmission electron microscopy the non-membrane bound mature protein (residues 24-350) has a thin elongated structure about 300 Angstroms long that is broader at one end (probably the head). Both linear and curved NadA3 molecules were observed. The head domain is recognized by monoclonal antibodies (PubMed:25404323). A structure encompassing residues 24-170 forms a 160 Angstroms-long coiled-coil stalk. The wing-like structures in this variant (residues 54-72) interrupt the coiled-coil stalk; the pack differently against the stalk than in variant 5 (PubMed:30327444). The 24-170 residue fragment binds human LOX-1 (OLR1) (PubMed:27302108).</text>
</comment>
<comment type="biotechnology">
    <text evidence="4 6 11">Several alleles exist that vary in length, this is allele 3; alleles 1, 2 and 3 generate cross-bactericidal antibodies. About 50% of hypervirulent serogroup B N.meningitidis encode this protein (PubMed:12045242). This is the variant used in the 4CMenB (Bexsero) vaccine (PubMed:25404323). This is the variant used in the 5CVMB vaccine (PubMed:16825336).</text>
</comment>
<comment type="similarity">
    <text evidence="16">Belongs to the autotransporter-2 (AT-2) (TC 1.B.40) family.</text>
</comment>
<comment type="caution">
    <text>The gene name nadA has also been given to quinolinate synthase.</text>
</comment>
<comment type="online information" name="Bexsero meningococcal group B Vaccine">
    <link uri="https://www.ema.europa.eu/en/medicines/human/EPAR/bexsero"/>
</comment>
<keyword id="KW-0002">3D-structure</keyword>
<keyword id="KW-0130">Cell adhesion</keyword>
<keyword id="KW-0998">Cell outer membrane</keyword>
<keyword id="KW-0175">Coiled coil</keyword>
<keyword id="KW-0472">Membrane</keyword>
<keyword id="KW-0732">Signal</keyword>
<keyword id="KW-0812">Transmembrane</keyword>
<keyword id="KW-1134">Transmembrane beta strand</keyword>
<keyword id="KW-0843">Virulence</keyword>
<gene>
    <name evidence="14" type="primary">nadA</name>
    <name evidence="16" type="synonym">nadA3</name>
</gene>
<evidence type="ECO:0000250" key="1">
    <source>
        <dbReference type="UniProtKB" id="A1JUB7"/>
    </source>
</evidence>
<evidence type="ECO:0000250" key="2">
    <source>
        <dbReference type="UniProtKB" id="P0C2W0"/>
    </source>
</evidence>
<evidence type="ECO:0000255" key="3"/>
<evidence type="ECO:0000269" key="4">
    <source>
    </source>
</evidence>
<evidence type="ECO:0000269" key="5">
    <source>
    </source>
</evidence>
<evidence type="ECO:0000269" key="6">
    <source>
    </source>
</evidence>
<evidence type="ECO:0000269" key="7">
    <source>
    </source>
</evidence>
<evidence type="ECO:0000269" key="8">
    <source>
    </source>
</evidence>
<evidence type="ECO:0000269" key="9">
    <source>
    </source>
</evidence>
<evidence type="ECO:0000269" key="10">
    <source>
    </source>
</evidence>
<evidence type="ECO:0000269" key="11">
    <source>
    </source>
</evidence>
<evidence type="ECO:0000269" key="12">
    <source>
    </source>
</evidence>
<evidence type="ECO:0000269" key="13">
    <source>
    </source>
</evidence>
<evidence type="ECO:0000303" key="14">
    <source>
    </source>
</evidence>
<evidence type="ECO:0000303" key="15">
    <source>
    </source>
</evidence>
<evidence type="ECO:0000305" key="16"/>
<evidence type="ECO:0000305" key="17">
    <source>
    </source>
</evidence>
<evidence type="ECO:0000305" key="18">
    <source>
    </source>
</evidence>
<evidence type="ECO:0000305" key="19">
    <source>
    </source>
</evidence>
<evidence type="ECO:0000305" key="20">
    <source>
    </source>
</evidence>
<evidence type="ECO:0000305" key="21">
    <source>
    </source>
</evidence>
<evidence type="ECO:0000312" key="22">
    <source>
        <dbReference type="EMBL" id="AAM53086.1"/>
    </source>
</evidence>
<evidence type="ECO:0007744" key="23">
    <source>
        <dbReference type="PDB" id="6EUN"/>
    </source>
</evidence>
<evidence type="ECO:0007744" key="24">
    <source>
        <dbReference type="PDB" id="6EUP"/>
    </source>
</evidence>
<evidence type="ECO:0007829" key="25">
    <source>
        <dbReference type="PDB" id="6EUN"/>
    </source>
</evidence>
<reference evidence="22" key="1">
    <citation type="journal article" date="2002" name="J. Exp. Med.">
        <title>NadA, a novel vaccine candidate of Neisseria meningitidis.</title>
        <authorList>
            <person name="Comanducci M."/>
            <person name="Bambini S."/>
            <person name="Brunelli B."/>
            <person name="Adu-Bobie J."/>
            <person name="Arico B."/>
            <person name="Capecchi B."/>
            <person name="Giuliani M.M."/>
            <person name="Masignani V."/>
            <person name="Santini L."/>
            <person name="Savino S."/>
            <person name="Granoff D.M."/>
            <person name="Caugant D.A."/>
            <person name="Pizza M."/>
            <person name="Rappuoli R."/>
            <person name="Mora M."/>
        </authorList>
    </citation>
    <scope>NUCLEOTIDE SEQUENCE [GENOMIC DNA]</scope>
    <scope>FUNCTION</scope>
    <scope>SUBUNIT</scope>
    <scope>SUBCELLULAR LOCATION</scope>
    <scope>INDUCTION</scope>
    <scope>BIOTECHNOLOGY</scope>
    <source>
        <strain evidence="22">CCUG 23106 / 2996 / Serogroup B / Serotype 2b</strain>
    </source>
</reference>
<reference key="2">
    <citation type="journal article" date="2005" name="Mol. Microbiol.">
        <title>Neisseria meningitidis NadA is a new invasin which promotes bacterial adhesion to and penetration into human epithelial cells.</title>
        <authorList>
            <person name="Capecchi B."/>
            <person name="Adu-Bobie J."/>
            <person name="Di Marcello F."/>
            <person name="Ciucchi L."/>
            <person name="Masignani V."/>
            <person name="Taddei A."/>
            <person name="Rappuoli R."/>
            <person name="Pizza M."/>
            <person name="Arico B."/>
        </authorList>
    </citation>
    <scope>FUNCTION IN BACTERIAL ADHESION AND UPTAKE</scope>
    <scope>SUBUNIT</scope>
    <scope>SUBCELLULAR LOCATION</scope>
    <scope>DOMAIN</scope>
    <scope>MUTAGENESIS OF 1-MET--ALA-23; 24-ALA--TYR-42; 43-ASN--ASP-70; 71-ALA--GLY-83 AND 351-ARG--TRP-405</scope>
    <source>
        <strain>CCUG 23106 / 2996 / Serogroup B / Serotype 2b</strain>
    </source>
</reference>
<reference key="3">
    <citation type="journal article" date="2006" name="Proc. Natl. Acad. Sci. U.S.A.">
        <title>A universal vaccine for serogroup B meningococcus.</title>
        <authorList>
            <person name="Giuliani M.M."/>
            <person name="Adu-Bobie J."/>
            <person name="Comanducci M."/>
            <person name="Arico B."/>
            <person name="Savino S."/>
            <person name="Santini L."/>
            <person name="Brunelli B."/>
            <person name="Bambini S."/>
            <person name="Biolchi A."/>
            <person name="Capecchi B."/>
            <person name="Cartocci E."/>
            <person name="Ciucchi L."/>
            <person name="Di Marcello F."/>
            <person name="Ferlicca F."/>
            <person name="Galli B."/>
            <person name="Luzzi E."/>
            <person name="Masignani V."/>
            <person name="Serruto D."/>
            <person name="Veggi D."/>
            <person name="Contorni M."/>
            <person name="Morandi M."/>
            <person name="Bartalesi A."/>
            <person name="Cinotti V."/>
            <person name="Mannucci D."/>
            <person name="Titta F."/>
            <person name="Ovidi E."/>
            <person name="Welsch J.A."/>
            <person name="Granoff D."/>
            <person name="Rappuoli R."/>
            <person name="Pizza M."/>
        </authorList>
    </citation>
    <scope>BIOTECHNOLOGY</scope>
    <source>
        <strain>CCUG 23106 / 2996 / Serogroup B / Serotype 2b</strain>
    </source>
</reference>
<reference key="4">
    <citation type="journal article" date="2009" name="Vaccine">
        <title>Structural organization of NadADelta(351-405), a recombinant MenB vaccine component, by its physico-chemical characterization at drug substance level.</title>
        <authorList>
            <person name="Magagnoli C."/>
            <person name="Bardotti A."/>
            <person name="De Conciliis G."/>
            <person name="Galasso R."/>
            <person name="Tomei M."/>
            <person name="Campa C."/>
            <person name="Pennatini C."/>
            <person name="Cerchioni M."/>
            <person name="Fabbri B."/>
            <person name="Giannini S."/>
            <person name="Mattioli G.L."/>
            <person name="Biolchi A."/>
            <person name="D'Ascenzi S."/>
            <person name="Helling F."/>
        </authorList>
    </citation>
    <scope>SUBUNIT</scope>
    <source>
        <strain>CCUG 23106 / 2996 / Serogroup B / Serotype 2b</strain>
    </source>
</reference>
<reference key="5">
    <citation type="journal article" date="2011" name="J. Bacteriol.">
        <title>Mapping of the Neisseria meningitidis NadA cell-binding site: relevance of predicted {alpha}-helices in the NH2-terminal and dimeric coiled-coil regions.</title>
        <authorList>
            <person name="Tavano R."/>
            <person name="Capecchi B."/>
            <person name="Montanari P."/>
            <person name="Franzoso S."/>
            <person name="Marin O."/>
            <person name="Sztukowska M."/>
            <person name="Cecchini P."/>
            <person name="Segat D."/>
            <person name="Scarselli M."/>
            <person name="Arico B."/>
            <person name="Papini E."/>
        </authorList>
    </citation>
    <scope>SUBCELLULAR LOCATION</scope>
    <scope>DOMAIN</scope>
    <scope>MUTAGENESIS OF 30-VAL--LYS-87; 88-LYS--ILE-150; 180-GLU--ASP-218; 219-ALA--ILE-288 AND 270-ALA--ARG-315</scope>
</reference>
<reference key="6">
    <citation type="journal article" date="2011" name="PLoS ONE">
        <title>The soluble recombinant Neisseria meningitidis adhesin NadA(Delta351-405) stimulates human monocytes by binding to extracellular Hsp90.</title>
        <authorList>
            <person name="Cecchini P."/>
            <person name="Tavano R."/>
            <person name="Polverino de Laureto P."/>
            <person name="Franzoso S."/>
            <person name="Mazzon C."/>
            <person name="Montanari P."/>
            <person name="Papini E."/>
        </authorList>
    </citation>
    <scope>FUNCTION</scope>
    <scope>INTERACTION WITH HUMAN HSP90-BETA</scope>
    <source>
        <strain>CCUG 23106 / 2996 / Serogroup B / Serotype 2b</strain>
    </source>
</reference>
<reference key="7">
    <citation type="journal article" date="2012" name="Cell. Microbiol.">
        <title>Human heat shock protein (Hsp) 90 interferes with Neisseria meningitidis adhesin A (NadA)-mediated adhesion and invasion.</title>
        <authorList>
            <person name="Montanari P."/>
            <person name="Bozza G."/>
            <person name="Capecchi B."/>
            <person name="Caproni E."/>
            <person name="Barrile R."/>
            <person name="Norais N."/>
            <person name="Capitani M."/>
            <person name="Sallese M."/>
            <person name="Cecchini P."/>
            <person name="Ciucchi L."/>
            <person name="Gao Z."/>
            <person name="Rappuoli R."/>
            <person name="Pizza M."/>
            <person name="Arico B."/>
            <person name="Merola M."/>
        </authorList>
    </citation>
    <scope>FUNCTION</scope>
    <scope>INTERACTION WITH HUMAN HSP90</scope>
</reference>
<reference key="8">
    <citation type="journal article" date="2014" name="PLoS ONE">
        <title>Role of ARF6, Rab11 and external Hsp90 in the trafficking and recycling of recombinant-soluble Neisseria meningitidis adhesin A (rNadA) in human epithelial cells.</title>
        <authorList>
            <person name="Bozza G."/>
            <person name="Capitani M."/>
            <person name="Montanari P."/>
            <person name="Benucci B."/>
            <person name="Biancucci M."/>
            <person name="Nardi-Dei V."/>
            <person name="Caproni E."/>
            <person name="Barrile R."/>
            <person name="Picciani B."/>
            <person name="Savino S."/>
            <person name="Arico B."/>
            <person name="Rappuoli R."/>
            <person name="Pizza M."/>
            <person name="Luini A."/>
            <person name="Sallese M."/>
            <person name="Merola M."/>
        </authorList>
    </citation>
    <scope>POSSIBLE FUNCTION IN UPTAKE BY HUMAN CELLS</scope>
</reference>
<reference key="9">
    <citation type="journal article" date="2014" name="Proc. Natl. Acad. Sci. U.S.A.">
        <title>Structure of the meningococcal vaccine antigen NadA and epitope mapping of a bactericidal antibody.</title>
        <authorList>
            <person name="Malito E."/>
            <person name="Biancucci M."/>
            <person name="Faleri A."/>
            <person name="Ferlenghi I."/>
            <person name="Scarselli M."/>
            <person name="Maruggi G."/>
            <person name="Lo Surdo P."/>
            <person name="Veggi D."/>
            <person name="Liguori A."/>
            <person name="Santini L."/>
            <person name="Bertoldi I."/>
            <person name="Petracca R."/>
            <person name="Marchi S."/>
            <person name="Romagnoli G."/>
            <person name="Cartocci E."/>
            <person name="Vercellino I."/>
            <person name="Savino S."/>
            <person name="Spraggon G."/>
            <person name="Norais N."/>
            <person name="Pizza M."/>
            <person name="Rappuoli R."/>
            <person name="Masignani V."/>
            <person name="Bottomley M.J."/>
        </authorList>
    </citation>
    <scope>ELECTRON MICROSCOPY OF 24-350</scope>
    <scope>DOMAIN</scope>
    <source>
        <strain>M01-240320</strain>
    </source>
</reference>
<reference key="10">
    <citation type="journal article" date="2016" name="Sci. Rep.">
        <title>Exploring host-pathogen interactions through genome wide protein microarray analysis.</title>
        <authorList>
            <person name="Scietti L."/>
            <person name="Sampieri K."/>
            <person name="Pinzuti I."/>
            <person name="Bartolini E."/>
            <person name="Benucci B."/>
            <person name="Liguori A."/>
            <person name="Haag A.F."/>
            <person name="Lo Surdo P."/>
            <person name="Pansegrau W."/>
            <person name="Nardi-Dei V."/>
            <person name="Santini L."/>
            <person name="Arora S."/>
            <person name="Leber X."/>
            <person name="Rindi S."/>
            <person name="Savino S."/>
            <person name="Costantino P."/>
            <person name="Maione D."/>
            <person name="Merola M."/>
            <person name="Speziale P."/>
            <person name="Bottomley M.J."/>
            <person name="Bagnoli F."/>
            <person name="Masignani V."/>
            <person name="Pizza M."/>
            <person name="Scharenberg M."/>
            <person name="Schlaeppi J.M."/>
            <person name="Nissum M."/>
            <person name="Liberatori S."/>
        </authorList>
    </citation>
    <scope>FUNCTION</scope>
    <scope>SUBUNIT</scope>
    <scope>INTERACTION WITH HUMAN LOX-1 (OLR1)</scope>
    <scope>DOMAIN</scope>
    <source>
        <strain>CCUG 23106 / 2996 / Serogroup B / Serotype 2b</strain>
    </source>
</reference>
<reference evidence="23 24" key="11">
    <citation type="journal article" date="2018" name="MBio">
        <title>NadA3 Structures Reveal Undecad Coiled Coils and LOX1 Binding Regions Competed by Meningococcus B Vaccine-Elicited Human Antibodies.</title>
        <authorList>
            <person name="Liguori A."/>
            <person name="Dello Iacono L."/>
            <person name="Maruggi G."/>
            <person name="Benucci B."/>
            <person name="Merola M."/>
            <person name="Lo Surdo P."/>
            <person name="Lopez-Sagaseta J."/>
            <person name="Pizza M."/>
            <person name="Malito E."/>
            <person name="Bottomley M.J."/>
        </authorList>
    </citation>
    <scope>X-RAY CRYSTALLOGRAPHY (2.65 ANGSTROMS) OF 24-170</scope>
    <scope>SUBUNIT</scope>
    <scope>INTERACTION WITH HUMAN LOX-1 (OLR1)</scope>
    <scope>DOMAIN</scope>
    <scope>MUTAGENESIS OF 33-ALA--ALA-39; 33-ALA--ILE-38; ALA-33 AND TYR-42</scope>
    <source>
        <strain>CCUG 23106 / 2996 / Serogroup B / Serotype 2b</strain>
    </source>
</reference>